<accession>Q6CRK4</accession>
<dbReference type="EMBL" id="CR382124">
    <property type="protein sequence ID" value="CAH00531.1"/>
    <property type="molecule type" value="Genomic_DNA"/>
</dbReference>
<dbReference type="RefSeq" id="XP_453435.1">
    <property type="nucleotide sequence ID" value="XM_453435.1"/>
</dbReference>
<dbReference type="SMR" id="Q6CRK4"/>
<dbReference type="FunCoup" id="Q6CRK4">
    <property type="interactions" value="489"/>
</dbReference>
<dbReference type="STRING" id="284590.Q6CRK4"/>
<dbReference type="PaxDb" id="284590-Q6CRK4"/>
<dbReference type="KEGG" id="kla:KLLA0_D08371g"/>
<dbReference type="eggNOG" id="KOG0646">
    <property type="taxonomic scope" value="Eukaryota"/>
</dbReference>
<dbReference type="HOGENOM" id="CLU_029749_4_0_1"/>
<dbReference type="InParanoid" id="Q6CRK4"/>
<dbReference type="OMA" id="WEAHYNK"/>
<dbReference type="Proteomes" id="UP000000598">
    <property type="component" value="Chromosome D"/>
</dbReference>
<dbReference type="GO" id="GO:0005656">
    <property type="term" value="C:nuclear pre-replicative complex"/>
    <property type="evidence" value="ECO:0007669"/>
    <property type="project" value="TreeGrafter"/>
</dbReference>
<dbReference type="GO" id="GO:0120330">
    <property type="term" value="C:rixosome complex"/>
    <property type="evidence" value="ECO:0007669"/>
    <property type="project" value="TreeGrafter"/>
</dbReference>
<dbReference type="GO" id="GO:0006261">
    <property type="term" value="P:DNA-templated DNA replication"/>
    <property type="evidence" value="ECO:0007669"/>
    <property type="project" value="TreeGrafter"/>
</dbReference>
<dbReference type="GO" id="GO:0006364">
    <property type="term" value="P:rRNA processing"/>
    <property type="evidence" value="ECO:0007669"/>
    <property type="project" value="UniProtKB-KW"/>
</dbReference>
<dbReference type="Gene3D" id="2.130.10.10">
    <property type="entry name" value="YVTN repeat-like/Quinoprotein amine dehydrogenase"/>
    <property type="match status" value="2"/>
</dbReference>
<dbReference type="InterPro" id="IPR015943">
    <property type="entry name" value="WD40/YVTN_repeat-like_dom_sf"/>
</dbReference>
<dbReference type="InterPro" id="IPR036322">
    <property type="entry name" value="WD40_repeat_dom_sf"/>
</dbReference>
<dbReference type="InterPro" id="IPR001680">
    <property type="entry name" value="WD40_rpt"/>
</dbReference>
<dbReference type="InterPro" id="IPR045227">
    <property type="entry name" value="WDR18/Ipi3/RID3"/>
</dbReference>
<dbReference type="PANTHER" id="PTHR18763:SF0">
    <property type="entry name" value="WD REPEAT-CONTAINING PROTEIN 18"/>
    <property type="match status" value="1"/>
</dbReference>
<dbReference type="PANTHER" id="PTHR18763">
    <property type="entry name" value="WD-REPEAT PROTEIN 18"/>
    <property type="match status" value="1"/>
</dbReference>
<dbReference type="SMART" id="SM00320">
    <property type="entry name" value="WD40"/>
    <property type="match status" value="3"/>
</dbReference>
<dbReference type="SUPFAM" id="SSF50978">
    <property type="entry name" value="WD40 repeat-like"/>
    <property type="match status" value="1"/>
</dbReference>
<proteinExistence type="inferred from homology"/>
<feature type="chain" id="PRO_0000308740" description="Pre-rRNA-processing protein IPI3">
    <location>
        <begin position="1"/>
        <end position="508"/>
    </location>
</feature>
<feature type="repeat" description="WD 1">
    <location>
        <begin position="74"/>
        <end position="113"/>
    </location>
</feature>
<feature type="repeat" description="WD 2">
    <location>
        <begin position="117"/>
        <end position="156"/>
    </location>
</feature>
<feature type="repeat" description="WD 3">
    <location>
        <begin position="214"/>
        <end position="255"/>
    </location>
</feature>
<feature type="repeat" description="WD 4">
    <location>
        <begin position="289"/>
        <end position="326"/>
    </location>
</feature>
<name>IPI3_KLULA</name>
<gene>
    <name type="primary">IPI3</name>
    <name type="ordered locus">KLLA0D08371g</name>
</gene>
<protein>
    <recommendedName>
        <fullName>Pre-rRNA-processing protein IPI3</fullName>
    </recommendedName>
</protein>
<reference key="1">
    <citation type="journal article" date="2004" name="Nature">
        <title>Genome evolution in yeasts.</title>
        <authorList>
            <person name="Dujon B."/>
            <person name="Sherman D."/>
            <person name="Fischer G."/>
            <person name="Durrens P."/>
            <person name="Casaregola S."/>
            <person name="Lafontaine I."/>
            <person name="de Montigny J."/>
            <person name="Marck C."/>
            <person name="Neuveglise C."/>
            <person name="Talla E."/>
            <person name="Goffard N."/>
            <person name="Frangeul L."/>
            <person name="Aigle M."/>
            <person name="Anthouard V."/>
            <person name="Babour A."/>
            <person name="Barbe V."/>
            <person name="Barnay S."/>
            <person name="Blanchin S."/>
            <person name="Beckerich J.-M."/>
            <person name="Beyne E."/>
            <person name="Bleykasten C."/>
            <person name="Boisrame A."/>
            <person name="Boyer J."/>
            <person name="Cattolico L."/>
            <person name="Confanioleri F."/>
            <person name="de Daruvar A."/>
            <person name="Despons L."/>
            <person name="Fabre E."/>
            <person name="Fairhead C."/>
            <person name="Ferry-Dumazet H."/>
            <person name="Groppi A."/>
            <person name="Hantraye F."/>
            <person name="Hennequin C."/>
            <person name="Jauniaux N."/>
            <person name="Joyet P."/>
            <person name="Kachouri R."/>
            <person name="Kerrest A."/>
            <person name="Koszul R."/>
            <person name="Lemaire M."/>
            <person name="Lesur I."/>
            <person name="Ma L."/>
            <person name="Muller H."/>
            <person name="Nicaud J.-M."/>
            <person name="Nikolski M."/>
            <person name="Oztas S."/>
            <person name="Ozier-Kalogeropoulos O."/>
            <person name="Pellenz S."/>
            <person name="Potier S."/>
            <person name="Richard G.-F."/>
            <person name="Straub M.-L."/>
            <person name="Suleau A."/>
            <person name="Swennen D."/>
            <person name="Tekaia F."/>
            <person name="Wesolowski-Louvel M."/>
            <person name="Westhof E."/>
            <person name="Wirth B."/>
            <person name="Zeniou-Meyer M."/>
            <person name="Zivanovic Y."/>
            <person name="Bolotin-Fukuhara M."/>
            <person name="Thierry A."/>
            <person name="Bouchier C."/>
            <person name="Caudron B."/>
            <person name="Scarpelli C."/>
            <person name="Gaillardin C."/>
            <person name="Weissenbach J."/>
            <person name="Wincker P."/>
            <person name="Souciet J.-L."/>
        </authorList>
    </citation>
    <scope>NUCLEOTIDE SEQUENCE [LARGE SCALE GENOMIC DNA]</scope>
    <source>
        <strain>ATCC 8585 / CBS 2359 / DSM 70799 / NBRC 1267 / NRRL Y-1140 / WM37</strain>
    </source>
</reference>
<comment type="function">
    <text evidence="1">Component of the RIX1 complex required for processing of ITS2 sequences from 35S pre-rRNA.</text>
</comment>
<comment type="subunit">
    <text evidence="1">Component of the RIX1 complex, composed of IPI1, RIX1/IPI2 and IPI3 in a 1:2:2 stoichiometry. The complex interacts (via RIX1) with MDN1 (via its hexameric AAA ATPase ring) and the pre-60S ribosome particles.</text>
</comment>
<comment type="subcellular location">
    <subcellularLocation>
        <location evidence="1">Nucleus</location>
    </subcellularLocation>
</comment>
<comment type="similarity">
    <text evidence="2">Belongs to the WD repeat IPI3/WDR18 family.</text>
</comment>
<keyword id="KW-0539">Nucleus</keyword>
<keyword id="KW-1185">Reference proteome</keyword>
<keyword id="KW-0677">Repeat</keyword>
<keyword id="KW-0690">Ribosome biogenesis</keyword>
<keyword id="KW-0698">rRNA processing</keyword>
<keyword id="KW-0853">WD repeat</keyword>
<sequence length="508" mass="56345">MDEQVIFTSNTAGTVATLHSLEQSSLRQCQTESKFSSCVVKQKYLFVAQSRKALIQVYDLHGSNKRESVEQRLPVPEVLQALECVDEDGLLLGATDSGKLYIWQLASGNLLNVKPMAHYQGIVKIKSICHGKYIVTAGSDSRLIFWQTMDLVQKDEPKPLFIIHDHSLPVTDFIFSNTLGHSLDGKLYTVSKDMSLRCYQVSVDHEPTCIATFTFPSSLNCVSLDTADRAIYVGTDTGVIQIPLYYKVSNSKIINLLQPNESKIYSITEITPGAMEPDLSSREKLFSIGQILCARIVHNNTTSVATSLDGSLLVSGDSTGKCTVTEIFSNQPLKEIRALSTNDSTGPVSNLIVFPVTQQSESLLDVTKIVKPWKFPNLQRAIVDRKHGINDVYVQFHENSVHNVLPVSDFDSYLDTVASEEHIFHQTGSINSTVNRVGQTKASMTATAKESKVSSDDDIYKSKDKQIAQLNGTVASLTDAYKELRKMHEDLMKEHQQLLSKNGTQTEN</sequence>
<organism>
    <name type="scientific">Kluyveromyces lactis (strain ATCC 8585 / CBS 2359 / DSM 70799 / NBRC 1267 / NRRL Y-1140 / WM37)</name>
    <name type="common">Yeast</name>
    <name type="synonym">Candida sphaerica</name>
    <dbReference type="NCBI Taxonomy" id="284590"/>
    <lineage>
        <taxon>Eukaryota</taxon>
        <taxon>Fungi</taxon>
        <taxon>Dikarya</taxon>
        <taxon>Ascomycota</taxon>
        <taxon>Saccharomycotina</taxon>
        <taxon>Saccharomycetes</taxon>
        <taxon>Saccharomycetales</taxon>
        <taxon>Saccharomycetaceae</taxon>
        <taxon>Kluyveromyces</taxon>
    </lineage>
</organism>
<evidence type="ECO:0000250" key="1">
    <source>
        <dbReference type="UniProtKB" id="P53877"/>
    </source>
</evidence>
<evidence type="ECO:0000305" key="2"/>